<comment type="function">
    <text evidence="1">Catalyzes the deacetylation of N-acetylaspartic acid (NAA) to produce acetate and L-aspartate. NAA occurs in high concentration in brain and its hydrolysis NAA plays a significant part in the maintenance of intact white matter. In other tissues it acts as a scavenger of NAA from body fluids.</text>
</comment>
<comment type="catalytic activity">
    <reaction evidence="1">
        <text>an N-acyl-L-aspartate + H2O = a carboxylate + L-aspartate</text>
        <dbReference type="Rhea" id="RHEA:10872"/>
        <dbReference type="ChEBI" id="CHEBI:15377"/>
        <dbReference type="ChEBI" id="CHEBI:29067"/>
        <dbReference type="ChEBI" id="CHEBI:29991"/>
        <dbReference type="ChEBI" id="CHEBI:58497"/>
        <dbReference type="EC" id="3.5.1.15"/>
    </reaction>
    <physiologicalReaction direction="left-to-right" evidence="1">
        <dbReference type="Rhea" id="RHEA:10873"/>
    </physiologicalReaction>
</comment>
<comment type="catalytic activity">
    <reaction evidence="1">
        <text>N-acetyl-L-aspartate + H2O = L-aspartate + acetate</text>
        <dbReference type="Rhea" id="RHEA:59408"/>
        <dbReference type="ChEBI" id="CHEBI:15377"/>
        <dbReference type="ChEBI" id="CHEBI:16953"/>
        <dbReference type="ChEBI" id="CHEBI:29991"/>
        <dbReference type="ChEBI" id="CHEBI:30089"/>
    </reaction>
    <physiologicalReaction direction="left-to-right" evidence="1">
        <dbReference type="Rhea" id="RHEA:59409"/>
    </physiologicalReaction>
</comment>
<comment type="cofactor">
    <cofactor evidence="1">
        <name>Zn(2+)</name>
        <dbReference type="ChEBI" id="CHEBI:29105"/>
    </cofactor>
    <text evidence="1">Binds 1 zinc ion per subunit.</text>
</comment>
<comment type="subunit">
    <text evidence="1">Homodimer.</text>
</comment>
<comment type="subcellular location">
    <subcellularLocation>
        <location evidence="2">Cytoplasm</location>
    </subcellularLocation>
    <subcellularLocation>
        <location evidence="2">Nucleus</location>
    </subcellularLocation>
</comment>
<comment type="similarity">
    <text evidence="3">Belongs to the AspA/AstE family. Aspartoacylase subfamily.</text>
</comment>
<reference key="1">
    <citation type="journal article" date="2000" name="Brain Res. Mol. Brain Res.">
        <title>Murine aspartoacylase: cloning, expression and comparison with the human enzyme.</title>
        <authorList>
            <person name="Namboodiri M.A."/>
            <person name="Corigliano-Murphy A."/>
            <person name="Jiang G."/>
            <person name="Rollag M."/>
            <person name="Provencio I."/>
        </authorList>
    </citation>
    <scope>NUCLEOTIDE SEQUENCE [MRNA]</scope>
</reference>
<reference key="2">
    <citation type="journal article" date="2005" name="Science">
        <title>The transcriptional landscape of the mammalian genome.</title>
        <authorList>
            <person name="Carninci P."/>
            <person name="Kasukawa T."/>
            <person name="Katayama S."/>
            <person name="Gough J."/>
            <person name="Frith M.C."/>
            <person name="Maeda N."/>
            <person name="Oyama R."/>
            <person name="Ravasi T."/>
            <person name="Lenhard B."/>
            <person name="Wells C."/>
            <person name="Kodzius R."/>
            <person name="Shimokawa K."/>
            <person name="Bajic V.B."/>
            <person name="Brenner S.E."/>
            <person name="Batalov S."/>
            <person name="Forrest A.R."/>
            <person name="Zavolan M."/>
            <person name="Davis M.J."/>
            <person name="Wilming L.G."/>
            <person name="Aidinis V."/>
            <person name="Allen J.E."/>
            <person name="Ambesi-Impiombato A."/>
            <person name="Apweiler R."/>
            <person name="Aturaliya R.N."/>
            <person name="Bailey T.L."/>
            <person name="Bansal M."/>
            <person name="Baxter L."/>
            <person name="Beisel K.W."/>
            <person name="Bersano T."/>
            <person name="Bono H."/>
            <person name="Chalk A.M."/>
            <person name="Chiu K.P."/>
            <person name="Choudhary V."/>
            <person name="Christoffels A."/>
            <person name="Clutterbuck D.R."/>
            <person name="Crowe M.L."/>
            <person name="Dalla E."/>
            <person name="Dalrymple B.P."/>
            <person name="de Bono B."/>
            <person name="Della Gatta G."/>
            <person name="di Bernardo D."/>
            <person name="Down T."/>
            <person name="Engstrom P."/>
            <person name="Fagiolini M."/>
            <person name="Faulkner G."/>
            <person name="Fletcher C.F."/>
            <person name="Fukushima T."/>
            <person name="Furuno M."/>
            <person name="Futaki S."/>
            <person name="Gariboldi M."/>
            <person name="Georgii-Hemming P."/>
            <person name="Gingeras T.R."/>
            <person name="Gojobori T."/>
            <person name="Green R.E."/>
            <person name="Gustincich S."/>
            <person name="Harbers M."/>
            <person name="Hayashi Y."/>
            <person name="Hensch T.K."/>
            <person name="Hirokawa N."/>
            <person name="Hill D."/>
            <person name="Huminiecki L."/>
            <person name="Iacono M."/>
            <person name="Ikeo K."/>
            <person name="Iwama A."/>
            <person name="Ishikawa T."/>
            <person name="Jakt M."/>
            <person name="Kanapin A."/>
            <person name="Katoh M."/>
            <person name="Kawasawa Y."/>
            <person name="Kelso J."/>
            <person name="Kitamura H."/>
            <person name="Kitano H."/>
            <person name="Kollias G."/>
            <person name="Krishnan S.P."/>
            <person name="Kruger A."/>
            <person name="Kummerfeld S.K."/>
            <person name="Kurochkin I.V."/>
            <person name="Lareau L.F."/>
            <person name="Lazarevic D."/>
            <person name="Lipovich L."/>
            <person name="Liu J."/>
            <person name="Liuni S."/>
            <person name="McWilliam S."/>
            <person name="Madan Babu M."/>
            <person name="Madera M."/>
            <person name="Marchionni L."/>
            <person name="Matsuda H."/>
            <person name="Matsuzawa S."/>
            <person name="Miki H."/>
            <person name="Mignone F."/>
            <person name="Miyake S."/>
            <person name="Morris K."/>
            <person name="Mottagui-Tabar S."/>
            <person name="Mulder N."/>
            <person name="Nakano N."/>
            <person name="Nakauchi H."/>
            <person name="Ng P."/>
            <person name="Nilsson R."/>
            <person name="Nishiguchi S."/>
            <person name="Nishikawa S."/>
            <person name="Nori F."/>
            <person name="Ohara O."/>
            <person name="Okazaki Y."/>
            <person name="Orlando V."/>
            <person name="Pang K.C."/>
            <person name="Pavan W.J."/>
            <person name="Pavesi G."/>
            <person name="Pesole G."/>
            <person name="Petrovsky N."/>
            <person name="Piazza S."/>
            <person name="Reed J."/>
            <person name="Reid J.F."/>
            <person name="Ring B.Z."/>
            <person name="Ringwald M."/>
            <person name="Rost B."/>
            <person name="Ruan Y."/>
            <person name="Salzberg S.L."/>
            <person name="Sandelin A."/>
            <person name="Schneider C."/>
            <person name="Schoenbach C."/>
            <person name="Sekiguchi K."/>
            <person name="Semple C.A."/>
            <person name="Seno S."/>
            <person name="Sessa L."/>
            <person name="Sheng Y."/>
            <person name="Shibata Y."/>
            <person name="Shimada H."/>
            <person name="Shimada K."/>
            <person name="Silva D."/>
            <person name="Sinclair B."/>
            <person name="Sperling S."/>
            <person name="Stupka E."/>
            <person name="Sugiura K."/>
            <person name="Sultana R."/>
            <person name="Takenaka Y."/>
            <person name="Taki K."/>
            <person name="Tammoja K."/>
            <person name="Tan S.L."/>
            <person name="Tang S."/>
            <person name="Taylor M.S."/>
            <person name="Tegner J."/>
            <person name="Teichmann S.A."/>
            <person name="Ueda H.R."/>
            <person name="van Nimwegen E."/>
            <person name="Verardo R."/>
            <person name="Wei C.L."/>
            <person name="Yagi K."/>
            <person name="Yamanishi H."/>
            <person name="Zabarovsky E."/>
            <person name="Zhu S."/>
            <person name="Zimmer A."/>
            <person name="Hide W."/>
            <person name="Bult C."/>
            <person name="Grimmond S.M."/>
            <person name="Teasdale R.D."/>
            <person name="Liu E.T."/>
            <person name="Brusic V."/>
            <person name="Quackenbush J."/>
            <person name="Wahlestedt C."/>
            <person name="Mattick J.S."/>
            <person name="Hume D.A."/>
            <person name="Kai C."/>
            <person name="Sasaki D."/>
            <person name="Tomaru Y."/>
            <person name="Fukuda S."/>
            <person name="Kanamori-Katayama M."/>
            <person name="Suzuki M."/>
            <person name="Aoki J."/>
            <person name="Arakawa T."/>
            <person name="Iida J."/>
            <person name="Imamura K."/>
            <person name="Itoh M."/>
            <person name="Kato T."/>
            <person name="Kawaji H."/>
            <person name="Kawagashira N."/>
            <person name="Kawashima T."/>
            <person name="Kojima M."/>
            <person name="Kondo S."/>
            <person name="Konno H."/>
            <person name="Nakano K."/>
            <person name="Ninomiya N."/>
            <person name="Nishio T."/>
            <person name="Okada M."/>
            <person name="Plessy C."/>
            <person name="Shibata K."/>
            <person name="Shiraki T."/>
            <person name="Suzuki S."/>
            <person name="Tagami M."/>
            <person name="Waki K."/>
            <person name="Watahiki A."/>
            <person name="Okamura-Oho Y."/>
            <person name="Suzuki H."/>
            <person name="Kawai J."/>
            <person name="Hayashizaki Y."/>
        </authorList>
    </citation>
    <scope>NUCLEOTIDE SEQUENCE [LARGE SCALE MRNA]</scope>
    <source>
        <strain>C57BL/6J</strain>
        <tissue>Kidney</tissue>
        <tissue>Small intestine</tissue>
    </source>
</reference>
<reference key="3">
    <citation type="journal article" date="2009" name="PLoS Biol.">
        <title>Lineage-specific biology revealed by a finished genome assembly of the mouse.</title>
        <authorList>
            <person name="Church D.M."/>
            <person name="Goodstadt L."/>
            <person name="Hillier L.W."/>
            <person name="Zody M.C."/>
            <person name="Goldstein S."/>
            <person name="She X."/>
            <person name="Bult C.J."/>
            <person name="Agarwala R."/>
            <person name="Cherry J.L."/>
            <person name="DiCuccio M."/>
            <person name="Hlavina W."/>
            <person name="Kapustin Y."/>
            <person name="Meric P."/>
            <person name="Maglott D."/>
            <person name="Birtle Z."/>
            <person name="Marques A.C."/>
            <person name="Graves T."/>
            <person name="Zhou S."/>
            <person name="Teague B."/>
            <person name="Potamousis K."/>
            <person name="Churas C."/>
            <person name="Place M."/>
            <person name="Herschleb J."/>
            <person name="Runnheim R."/>
            <person name="Forrest D."/>
            <person name="Amos-Landgraf J."/>
            <person name="Schwartz D.C."/>
            <person name="Cheng Z."/>
            <person name="Lindblad-Toh K."/>
            <person name="Eichler E.E."/>
            <person name="Ponting C.P."/>
        </authorList>
    </citation>
    <scope>NUCLEOTIDE SEQUENCE [LARGE SCALE GENOMIC DNA]</scope>
    <source>
        <strain>C57BL/6J</strain>
    </source>
</reference>
<reference key="4">
    <citation type="journal article" date="2004" name="Genome Res.">
        <title>The status, quality, and expansion of the NIH full-length cDNA project: the Mammalian Gene Collection (MGC).</title>
        <authorList>
            <consortium name="The MGC Project Team"/>
        </authorList>
    </citation>
    <scope>NUCLEOTIDE SEQUENCE [LARGE SCALE MRNA]</scope>
</reference>
<reference key="5">
    <citation type="submission" date="2007-03" db="UniProtKB">
        <authorList>
            <person name="Lubec G."/>
            <person name="Klug S."/>
        </authorList>
    </citation>
    <scope>PROTEIN SEQUENCE OF 172-187 AND 200-212</scope>
    <scope>IDENTIFICATION BY MASS SPECTROMETRY</scope>
    <source>
        <tissue>Hippocampus</tissue>
    </source>
</reference>
<reference key="6">
    <citation type="journal article" date="2010" name="Cell">
        <title>A tissue-specific atlas of mouse protein phosphorylation and expression.</title>
        <authorList>
            <person name="Huttlin E.L."/>
            <person name="Jedrychowski M.P."/>
            <person name="Elias J.E."/>
            <person name="Goswami T."/>
            <person name="Rad R."/>
            <person name="Beausoleil S.A."/>
            <person name="Villen J."/>
            <person name="Haas W."/>
            <person name="Sowa M.E."/>
            <person name="Gygi S.P."/>
        </authorList>
    </citation>
    <scope>IDENTIFICATION BY MASS SPECTROMETRY [LARGE SCALE ANALYSIS]</scope>
    <source>
        <tissue>Brain</tissue>
        <tissue>Brown adipose tissue</tissue>
        <tissue>Kidney</tissue>
        <tissue>Liver</tissue>
    </source>
</reference>
<feature type="chain" id="PRO_0000216873" description="Aspartoacylase">
    <location>
        <begin position="1"/>
        <end position="312"/>
    </location>
</feature>
<feature type="active site" description="Proton donor/acceptor" evidence="1">
    <location>
        <position position="177"/>
    </location>
</feature>
<feature type="binding site" evidence="1">
    <location>
        <position position="20"/>
    </location>
    <ligand>
        <name>Zn(2+)</name>
        <dbReference type="ChEBI" id="CHEBI:29105"/>
    </ligand>
</feature>
<feature type="binding site" evidence="1">
    <location>
        <position position="23"/>
    </location>
    <ligand>
        <name>Zn(2+)</name>
        <dbReference type="ChEBI" id="CHEBI:29105"/>
    </ligand>
</feature>
<feature type="binding site" evidence="1">
    <location>
        <position position="62"/>
    </location>
    <ligand>
        <name>N-acetyl-L-aspartate</name>
        <dbReference type="ChEBI" id="CHEBI:16953"/>
    </ligand>
</feature>
<feature type="binding site" evidence="1">
    <location>
        <position position="69"/>
    </location>
    <ligand>
        <name>N-acetyl-L-aspartate</name>
        <dbReference type="ChEBI" id="CHEBI:16953"/>
    </ligand>
</feature>
<feature type="binding site" evidence="1">
    <location>
        <position position="70"/>
    </location>
    <ligand>
        <name>N-acetyl-L-aspartate</name>
        <dbReference type="ChEBI" id="CHEBI:16953"/>
    </ligand>
</feature>
<feature type="binding site" evidence="1">
    <location>
        <position position="115"/>
    </location>
    <ligand>
        <name>Zn(2+)</name>
        <dbReference type="ChEBI" id="CHEBI:29105"/>
    </ligand>
</feature>
<feature type="binding site" evidence="1">
    <location>
        <position position="163"/>
    </location>
    <ligand>
        <name>N-acetyl-L-aspartate</name>
        <dbReference type="ChEBI" id="CHEBI:16953"/>
    </ligand>
</feature>
<feature type="binding site" evidence="1">
    <location>
        <position position="167"/>
    </location>
    <ligand>
        <name>N-acetyl-L-aspartate</name>
        <dbReference type="ChEBI" id="CHEBI:16953"/>
    </ligand>
</feature>
<feature type="binding site" evidence="1">
    <location>
        <position position="287"/>
    </location>
    <ligand>
        <name>N-acetyl-L-aspartate</name>
        <dbReference type="ChEBI" id="CHEBI:16953"/>
    </ligand>
</feature>
<feature type="site" description="Transition state stabilizer" evidence="1">
    <location>
        <position position="62"/>
    </location>
</feature>
<feature type="sequence conflict" description="In Ref. 1; AAF76459 and 4; AAH24934." evidence="3" ref="1 4">
    <original>L</original>
    <variation>I</variation>
    <location>
        <position position="110"/>
    </location>
</feature>
<feature type="sequence conflict" description="In Ref. 2; BAB25624." evidence="3" ref="2">
    <original>V</original>
    <variation>G</variation>
    <location>
        <position position="153"/>
    </location>
</feature>
<feature type="sequence conflict" description="In Ref. 2; BAB25624." evidence="3" ref="2">
    <original>S</original>
    <variation>L</variation>
    <location>
        <position position="160"/>
    </location>
</feature>
<feature type="sequence conflict" description="In Ref. 2; BAB25624." evidence="3" ref="2">
    <original>C</original>
    <variation>Y</variation>
    <location>
        <position position="275"/>
    </location>
</feature>
<feature type="sequence conflict" description="In Ref. 1; AAF76459." evidence="3" ref="1">
    <original>H</original>
    <variation>P</variation>
    <location>
        <position position="312"/>
    </location>
</feature>
<organism>
    <name type="scientific">Mus musculus</name>
    <name type="common">Mouse</name>
    <dbReference type="NCBI Taxonomy" id="10090"/>
    <lineage>
        <taxon>Eukaryota</taxon>
        <taxon>Metazoa</taxon>
        <taxon>Chordata</taxon>
        <taxon>Craniata</taxon>
        <taxon>Vertebrata</taxon>
        <taxon>Euteleostomi</taxon>
        <taxon>Mammalia</taxon>
        <taxon>Eutheria</taxon>
        <taxon>Euarchontoglires</taxon>
        <taxon>Glires</taxon>
        <taxon>Rodentia</taxon>
        <taxon>Myomorpha</taxon>
        <taxon>Muroidea</taxon>
        <taxon>Muridae</taxon>
        <taxon>Murinae</taxon>
        <taxon>Mus</taxon>
        <taxon>Mus</taxon>
    </lineage>
</organism>
<accession>Q8R3P0</accession>
<accession>Q5SV07</accession>
<accession>Q9D876</accession>
<accession>Q9DCE2</accession>
<accession>Q9JIN8</accession>
<gene>
    <name evidence="4" type="primary">Aspa</name>
</gene>
<proteinExistence type="evidence at protein level"/>
<evidence type="ECO:0000250" key="1">
    <source>
        <dbReference type="UniProtKB" id="P45381"/>
    </source>
</evidence>
<evidence type="ECO:0000250" key="2">
    <source>
        <dbReference type="UniProtKB" id="Q9R1T5"/>
    </source>
</evidence>
<evidence type="ECO:0000305" key="3"/>
<evidence type="ECO:0000312" key="4">
    <source>
        <dbReference type="MGI" id="MGI:87914"/>
    </source>
</evidence>
<dbReference type="EC" id="3.5.1.15" evidence="1"/>
<dbReference type="EMBL" id="AF212998">
    <property type="protein sequence ID" value="AAF76459.1"/>
    <property type="molecule type" value="mRNA"/>
</dbReference>
<dbReference type="EMBL" id="AK002859">
    <property type="protein sequence ID" value="BAB22412.1"/>
    <property type="molecule type" value="mRNA"/>
</dbReference>
<dbReference type="EMBL" id="AK008354">
    <property type="protein sequence ID" value="BAB25624.1"/>
    <property type="molecule type" value="mRNA"/>
</dbReference>
<dbReference type="EMBL" id="AL645739">
    <property type="status" value="NOT_ANNOTATED_CDS"/>
    <property type="molecule type" value="Genomic_DNA"/>
</dbReference>
<dbReference type="EMBL" id="BC024934">
    <property type="protein sequence ID" value="AAH24934.1"/>
    <property type="molecule type" value="mRNA"/>
</dbReference>
<dbReference type="CCDS" id="CCDS25005.1"/>
<dbReference type="RefSeq" id="NP_001404193.1">
    <property type="nucleotide sequence ID" value="NM_001417264.1"/>
</dbReference>
<dbReference type="RefSeq" id="NP_001404195.1">
    <property type="nucleotide sequence ID" value="NM_001417266.1"/>
</dbReference>
<dbReference type="RefSeq" id="NP_001404196.1">
    <property type="nucleotide sequence ID" value="NM_001417267.1"/>
</dbReference>
<dbReference type="RefSeq" id="NP_075602.2">
    <property type="nucleotide sequence ID" value="NM_023113.5"/>
</dbReference>
<dbReference type="RefSeq" id="XP_006532073.2">
    <property type="nucleotide sequence ID" value="XM_006532010.3"/>
</dbReference>
<dbReference type="RefSeq" id="XP_006532074.1">
    <property type="nucleotide sequence ID" value="XM_006532011.2"/>
</dbReference>
<dbReference type="RefSeq" id="XP_006532075.1">
    <property type="nucleotide sequence ID" value="XM_006532012.3"/>
</dbReference>
<dbReference type="SMR" id="Q8R3P0"/>
<dbReference type="BioGRID" id="197958">
    <property type="interactions" value="1"/>
</dbReference>
<dbReference type="FunCoup" id="Q8R3P0">
    <property type="interactions" value="1335"/>
</dbReference>
<dbReference type="IntAct" id="Q8R3P0">
    <property type="interactions" value="3"/>
</dbReference>
<dbReference type="MINT" id="Q8R3P0"/>
<dbReference type="STRING" id="10090.ENSMUSP00000139318"/>
<dbReference type="iPTMnet" id="Q8R3P0"/>
<dbReference type="PhosphoSitePlus" id="Q8R3P0"/>
<dbReference type="SwissPalm" id="Q8R3P0"/>
<dbReference type="jPOST" id="Q8R3P0"/>
<dbReference type="PaxDb" id="10090-ENSMUSP00000021119"/>
<dbReference type="PeptideAtlas" id="Q8R3P0"/>
<dbReference type="ProteomicsDB" id="285662"/>
<dbReference type="Antibodypedia" id="10844">
    <property type="antibodies" value="294 antibodies from 31 providers"/>
</dbReference>
<dbReference type="DNASU" id="11484"/>
<dbReference type="Ensembl" id="ENSMUST00000021119.9">
    <property type="protein sequence ID" value="ENSMUSP00000021119.3"/>
    <property type="gene ID" value="ENSMUSG00000020774.10"/>
</dbReference>
<dbReference type="Ensembl" id="ENSMUST00000184572.8">
    <property type="protein sequence ID" value="ENSMUSP00000139318.2"/>
    <property type="gene ID" value="ENSMUSG00000020774.10"/>
</dbReference>
<dbReference type="GeneID" id="11484"/>
<dbReference type="KEGG" id="mmu:11484"/>
<dbReference type="UCSC" id="uc007kal.2">
    <property type="organism name" value="mouse"/>
</dbReference>
<dbReference type="AGR" id="MGI:87914"/>
<dbReference type="CTD" id="443"/>
<dbReference type="MGI" id="MGI:87914">
    <property type="gene designation" value="Aspa"/>
</dbReference>
<dbReference type="VEuPathDB" id="HostDB:ENSMUSG00000020774"/>
<dbReference type="eggNOG" id="ENOG502QRAK">
    <property type="taxonomic scope" value="Eukaryota"/>
</dbReference>
<dbReference type="GeneTree" id="ENSGT00390000001189"/>
<dbReference type="HOGENOM" id="CLU_083292_0_0_1"/>
<dbReference type="InParanoid" id="Q8R3P0"/>
<dbReference type="OMA" id="THGNEIN"/>
<dbReference type="OrthoDB" id="8300214at2759"/>
<dbReference type="PhylomeDB" id="Q8R3P0"/>
<dbReference type="TreeFam" id="TF328708"/>
<dbReference type="BRENDA" id="3.5.1.15">
    <property type="organism ID" value="3474"/>
</dbReference>
<dbReference type="Reactome" id="R-MMU-8963693">
    <property type="pathway name" value="Aspartate and asparagine metabolism"/>
</dbReference>
<dbReference type="BioGRID-ORCS" id="11484">
    <property type="hits" value="0 hits in 77 CRISPR screens"/>
</dbReference>
<dbReference type="PRO" id="PR:Q8R3P0"/>
<dbReference type="Proteomes" id="UP000000589">
    <property type="component" value="Chromosome 11"/>
</dbReference>
<dbReference type="RNAct" id="Q8R3P0">
    <property type="molecule type" value="protein"/>
</dbReference>
<dbReference type="Bgee" id="ENSMUSG00000020774">
    <property type="expression patterns" value="Expressed in right kidney and 215 other cell types or tissues"/>
</dbReference>
<dbReference type="ExpressionAtlas" id="Q8R3P0">
    <property type="expression patterns" value="baseline and differential"/>
</dbReference>
<dbReference type="GO" id="GO:0005829">
    <property type="term" value="C:cytosol"/>
    <property type="evidence" value="ECO:0000314"/>
    <property type="project" value="UniProtKB"/>
</dbReference>
<dbReference type="GO" id="GO:0005634">
    <property type="term" value="C:nucleus"/>
    <property type="evidence" value="ECO:0007669"/>
    <property type="project" value="UniProtKB-SubCell"/>
</dbReference>
<dbReference type="GO" id="GO:0004046">
    <property type="term" value="F:aminoacylase activity"/>
    <property type="evidence" value="ECO:0000304"/>
    <property type="project" value="MGI"/>
</dbReference>
<dbReference type="GO" id="GO:0019807">
    <property type="term" value="F:aspartoacylase activity"/>
    <property type="evidence" value="ECO:0000314"/>
    <property type="project" value="MGI"/>
</dbReference>
<dbReference type="GO" id="GO:0016788">
    <property type="term" value="F:hydrolase activity, acting on ester bonds"/>
    <property type="evidence" value="ECO:0007669"/>
    <property type="project" value="InterPro"/>
</dbReference>
<dbReference type="GO" id="GO:0042802">
    <property type="term" value="F:identical protein binding"/>
    <property type="evidence" value="ECO:0007669"/>
    <property type="project" value="Ensembl"/>
</dbReference>
<dbReference type="GO" id="GO:0046872">
    <property type="term" value="F:metal ion binding"/>
    <property type="evidence" value="ECO:0007669"/>
    <property type="project" value="UniProtKB-KW"/>
</dbReference>
<dbReference type="GO" id="GO:0006083">
    <property type="term" value="P:acetate metabolic process"/>
    <property type="evidence" value="ECO:0000316"/>
    <property type="project" value="MGI"/>
</dbReference>
<dbReference type="GO" id="GO:0006531">
    <property type="term" value="P:aspartate metabolic process"/>
    <property type="evidence" value="ECO:0000316"/>
    <property type="project" value="MGI"/>
</dbReference>
<dbReference type="CDD" id="cd06909">
    <property type="entry name" value="M14_ASPA"/>
    <property type="match status" value="1"/>
</dbReference>
<dbReference type="FunFam" id="2.20.25.160:FF:000001">
    <property type="entry name" value="Aspartoacylase"/>
    <property type="match status" value="1"/>
</dbReference>
<dbReference type="FunFam" id="3.40.630.10:FF:000025">
    <property type="entry name" value="aspartoacylase"/>
    <property type="match status" value="1"/>
</dbReference>
<dbReference type="Gene3D" id="2.20.25.160">
    <property type="match status" value="1"/>
</dbReference>
<dbReference type="Gene3D" id="3.40.630.10">
    <property type="entry name" value="Zn peptidases"/>
    <property type="match status" value="1"/>
</dbReference>
<dbReference type="HAMAP" id="MF_00704">
    <property type="entry name" value="Aspartoacylase"/>
    <property type="match status" value="1"/>
</dbReference>
<dbReference type="InterPro" id="IPR050178">
    <property type="entry name" value="AspA/AstE_fam"/>
</dbReference>
<dbReference type="InterPro" id="IPR016708">
    <property type="entry name" value="Aspartoacylase"/>
</dbReference>
<dbReference type="InterPro" id="IPR055438">
    <property type="entry name" value="AstE_AspA_cat"/>
</dbReference>
<dbReference type="InterPro" id="IPR007036">
    <property type="entry name" value="Aste_AspA_hybrid_dom"/>
</dbReference>
<dbReference type="NCBIfam" id="NF002601">
    <property type="entry name" value="PRK02259.1"/>
    <property type="match status" value="1"/>
</dbReference>
<dbReference type="PANTHER" id="PTHR15162">
    <property type="entry name" value="ASPARTOACYLASE"/>
    <property type="match status" value="1"/>
</dbReference>
<dbReference type="PANTHER" id="PTHR15162:SF9">
    <property type="entry name" value="ASPARTOACYLASE"/>
    <property type="match status" value="1"/>
</dbReference>
<dbReference type="Pfam" id="PF24827">
    <property type="entry name" value="AstE_AspA_cat"/>
    <property type="match status" value="1"/>
</dbReference>
<dbReference type="Pfam" id="PF04952">
    <property type="entry name" value="AstE_AspA_hybrid"/>
    <property type="match status" value="1"/>
</dbReference>
<dbReference type="PIRSF" id="PIRSF018001">
    <property type="entry name" value="Aspartoacylase"/>
    <property type="match status" value="1"/>
</dbReference>
<dbReference type="SUPFAM" id="SSF53187">
    <property type="entry name" value="Zn-dependent exopeptidases"/>
    <property type="match status" value="1"/>
</dbReference>
<name>ACY2_MOUSE</name>
<protein>
    <recommendedName>
        <fullName evidence="1">Aspartoacylase</fullName>
        <ecNumber evidence="1">3.5.1.15</ecNumber>
    </recommendedName>
    <alternativeName>
        <fullName>Aminoacylase-2</fullName>
        <shortName>ACY-2</shortName>
    </alternativeName>
</protein>
<sequence length="312" mass="35345">MTSCVAKEPIKKIAIFGGTHGNELTGVFLVTHWLRNGTEVHRAGLDVKPFITNPRAVEKCTRYIDCDLNRVFDLENLSKEMSEDLPYEVRRAQEINHLFGPKNSDDAYDLVFDLHNTTSNMGCTLILEDSRNDFLIQMFHYIKTCMAPLPCSVYLIEHPSLKYATTRSIAKYPVGIEVGPQPHGVLRADILDQMRKMIKHALDFIQHFNEGKEFPPCSIDVYKIMEKVDYPRNESGDMAAVIHPNLQDQDWKPLHPGDPVFVSLDGKVIPLGGDCTVYPVFVNEAAYYEKKEAFAKTTKLTLSAKSIRSTLH</sequence>
<keyword id="KW-0963">Cytoplasm</keyword>
<keyword id="KW-0903">Direct protein sequencing</keyword>
<keyword id="KW-0378">Hydrolase</keyword>
<keyword id="KW-0479">Metal-binding</keyword>
<keyword id="KW-0539">Nucleus</keyword>
<keyword id="KW-1185">Reference proteome</keyword>
<keyword id="KW-0862">Zinc</keyword>